<feature type="chain" id="PRO_1000080873" description="Thiazole synthase">
    <location>
        <begin position="1"/>
        <end position="256"/>
    </location>
</feature>
<feature type="active site" description="Schiff-base intermediate with DXP" evidence="1">
    <location>
        <position position="97"/>
    </location>
</feature>
<feature type="binding site" evidence="1">
    <location>
        <position position="158"/>
    </location>
    <ligand>
        <name>1-deoxy-D-xylulose 5-phosphate</name>
        <dbReference type="ChEBI" id="CHEBI:57792"/>
    </ligand>
</feature>
<feature type="binding site" evidence="1">
    <location>
        <begin position="184"/>
        <end position="185"/>
    </location>
    <ligand>
        <name>1-deoxy-D-xylulose 5-phosphate</name>
        <dbReference type="ChEBI" id="CHEBI:57792"/>
    </ligand>
</feature>
<feature type="binding site" evidence="1">
    <location>
        <begin position="206"/>
        <end position="207"/>
    </location>
    <ligand>
        <name>1-deoxy-D-xylulose 5-phosphate</name>
        <dbReference type="ChEBI" id="CHEBI:57792"/>
    </ligand>
</feature>
<sequence length="256" mass="27186">MEDTFKIGGRELTSRLFLGTGKFSSNRLIPEAVRASGAQVVTVALRRIDLEYEEENIAAYVPKDCILMPNTSGARNAQEAVRIARLARAAGCGNWVKIEVITDNRYLLPDNYETIKATEILAAEGFVVLPYMSPDLMVAKKLAEAGAAAVMPLGAPIGSNRGLRTKELVRILIDEIPLPIIVDAGLGRPSEAAEAMEMGAAAVLVNTAIATAGDPVAMARAFGLAVKAGRLAYLAGPGETQEYARASSPLTGFLRD</sequence>
<protein>
    <recommendedName>
        <fullName evidence="1">Thiazole synthase</fullName>
        <ecNumber evidence="1">2.8.1.10</ecNumber>
    </recommendedName>
</protein>
<evidence type="ECO:0000255" key="1">
    <source>
        <dbReference type="HAMAP-Rule" id="MF_00443"/>
    </source>
</evidence>
<accession>A5D4K1</accession>
<comment type="function">
    <text evidence="1">Catalyzes the rearrangement of 1-deoxy-D-xylulose 5-phosphate (DXP) to produce the thiazole phosphate moiety of thiamine. Sulfur is provided by the thiocarboxylate moiety of the carrier protein ThiS. In vitro, sulfur can be provided by H(2)S.</text>
</comment>
<comment type="catalytic activity">
    <reaction evidence="1">
        <text>[ThiS sulfur-carrier protein]-C-terminal-Gly-aminoethanethioate + 2-iminoacetate + 1-deoxy-D-xylulose 5-phosphate = [ThiS sulfur-carrier protein]-C-terminal Gly-Gly + 2-[(2R,5Z)-2-carboxy-4-methylthiazol-5(2H)-ylidene]ethyl phosphate + 2 H2O + H(+)</text>
        <dbReference type="Rhea" id="RHEA:26297"/>
        <dbReference type="Rhea" id="RHEA-COMP:12909"/>
        <dbReference type="Rhea" id="RHEA-COMP:19908"/>
        <dbReference type="ChEBI" id="CHEBI:15377"/>
        <dbReference type="ChEBI" id="CHEBI:15378"/>
        <dbReference type="ChEBI" id="CHEBI:57792"/>
        <dbReference type="ChEBI" id="CHEBI:62899"/>
        <dbReference type="ChEBI" id="CHEBI:77846"/>
        <dbReference type="ChEBI" id="CHEBI:90778"/>
        <dbReference type="ChEBI" id="CHEBI:232372"/>
        <dbReference type="EC" id="2.8.1.10"/>
    </reaction>
</comment>
<comment type="pathway">
    <text evidence="1">Cofactor biosynthesis; thiamine diphosphate biosynthesis.</text>
</comment>
<comment type="subunit">
    <text evidence="1">Homotetramer. Forms heterodimers with either ThiH or ThiS.</text>
</comment>
<comment type="subcellular location">
    <subcellularLocation>
        <location evidence="1">Cytoplasm</location>
    </subcellularLocation>
</comment>
<comment type="similarity">
    <text evidence="1">Belongs to the ThiG family.</text>
</comment>
<gene>
    <name evidence="1" type="primary">thiG</name>
    <name type="ordered locus">PTH_0640</name>
</gene>
<proteinExistence type="inferred from homology"/>
<dbReference type="EC" id="2.8.1.10" evidence="1"/>
<dbReference type="EMBL" id="AP009389">
    <property type="protein sequence ID" value="BAF58821.1"/>
    <property type="molecule type" value="Genomic_DNA"/>
</dbReference>
<dbReference type="SMR" id="A5D4K1"/>
<dbReference type="STRING" id="370438.PTH_0640"/>
<dbReference type="KEGG" id="pth:PTH_0640"/>
<dbReference type="eggNOG" id="COG2022">
    <property type="taxonomic scope" value="Bacteria"/>
</dbReference>
<dbReference type="HOGENOM" id="CLU_062233_1_0_9"/>
<dbReference type="UniPathway" id="UPA00060"/>
<dbReference type="Proteomes" id="UP000006556">
    <property type="component" value="Chromosome"/>
</dbReference>
<dbReference type="GO" id="GO:0005737">
    <property type="term" value="C:cytoplasm"/>
    <property type="evidence" value="ECO:0007669"/>
    <property type="project" value="UniProtKB-SubCell"/>
</dbReference>
<dbReference type="GO" id="GO:1990107">
    <property type="term" value="F:thiazole synthase activity"/>
    <property type="evidence" value="ECO:0007669"/>
    <property type="project" value="UniProtKB-EC"/>
</dbReference>
<dbReference type="GO" id="GO:0009229">
    <property type="term" value="P:thiamine diphosphate biosynthetic process"/>
    <property type="evidence" value="ECO:0007669"/>
    <property type="project" value="UniProtKB-UniRule"/>
</dbReference>
<dbReference type="CDD" id="cd04728">
    <property type="entry name" value="ThiG"/>
    <property type="match status" value="1"/>
</dbReference>
<dbReference type="Gene3D" id="3.20.20.70">
    <property type="entry name" value="Aldolase class I"/>
    <property type="match status" value="1"/>
</dbReference>
<dbReference type="HAMAP" id="MF_00443">
    <property type="entry name" value="ThiG"/>
    <property type="match status" value="1"/>
</dbReference>
<dbReference type="InterPro" id="IPR013785">
    <property type="entry name" value="Aldolase_TIM"/>
</dbReference>
<dbReference type="InterPro" id="IPR033983">
    <property type="entry name" value="Thiazole_synthase_ThiG"/>
</dbReference>
<dbReference type="InterPro" id="IPR008867">
    <property type="entry name" value="ThiG"/>
</dbReference>
<dbReference type="PANTHER" id="PTHR34266">
    <property type="entry name" value="THIAZOLE SYNTHASE"/>
    <property type="match status" value="1"/>
</dbReference>
<dbReference type="PANTHER" id="PTHR34266:SF2">
    <property type="entry name" value="THIAZOLE SYNTHASE"/>
    <property type="match status" value="1"/>
</dbReference>
<dbReference type="Pfam" id="PF05690">
    <property type="entry name" value="ThiG"/>
    <property type="match status" value="1"/>
</dbReference>
<dbReference type="SUPFAM" id="SSF110399">
    <property type="entry name" value="ThiG-like"/>
    <property type="match status" value="1"/>
</dbReference>
<keyword id="KW-0963">Cytoplasm</keyword>
<keyword id="KW-1185">Reference proteome</keyword>
<keyword id="KW-0704">Schiff base</keyword>
<keyword id="KW-0784">Thiamine biosynthesis</keyword>
<keyword id="KW-0808">Transferase</keyword>
<name>THIG_PELTS</name>
<organism>
    <name type="scientific">Pelotomaculum thermopropionicum (strain DSM 13744 / JCM 10971 / SI)</name>
    <dbReference type="NCBI Taxonomy" id="370438"/>
    <lineage>
        <taxon>Bacteria</taxon>
        <taxon>Bacillati</taxon>
        <taxon>Bacillota</taxon>
        <taxon>Clostridia</taxon>
        <taxon>Eubacteriales</taxon>
        <taxon>Desulfotomaculaceae</taxon>
        <taxon>Pelotomaculum</taxon>
    </lineage>
</organism>
<reference key="1">
    <citation type="journal article" date="2008" name="Genome Res.">
        <title>The genome of Pelotomaculum thermopropionicum reveals niche-associated evolution in anaerobic microbiota.</title>
        <authorList>
            <person name="Kosaka T."/>
            <person name="Kato S."/>
            <person name="Shimoyama T."/>
            <person name="Ishii S."/>
            <person name="Abe T."/>
            <person name="Watanabe K."/>
        </authorList>
    </citation>
    <scope>NUCLEOTIDE SEQUENCE [LARGE SCALE GENOMIC DNA]</scope>
    <source>
        <strain>DSM 13744 / JCM 10971 / SI</strain>
    </source>
</reference>